<proteinExistence type="predicted"/>
<feature type="chain" id="PRO_0000202274" description="Uncharacterized protein TP_0564">
    <location>
        <begin position="1"/>
        <end position="678"/>
    </location>
</feature>
<feature type="transmembrane region" description="Helical" evidence="1">
    <location>
        <begin position="228"/>
        <end position="250"/>
    </location>
</feature>
<feature type="transmembrane region" description="Helical" evidence="1">
    <location>
        <begin position="263"/>
        <end position="285"/>
    </location>
</feature>
<feature type="transmembrane region" description="Helical" evidence="1">
    <location>
        <begin position="300"/>
        <end position="322"/>
    </location>
</feature>
<feature type="transmembrane region" description="Helical" evidence="1">
    <location>
        <begin position="334"/>
        <end position="356"/>
    </location>
</feature>
<feature type="transmembrane region" description="Helical" evidence="1">
    <location>
        <begin position="361"/>
        <end position="380"/>
    </location>
</feature>
<feature type="transmembrane region" description="Helical" evidence="1">
    <location>
        <begin position="387"/>
        <end position="405"/>
    </location>
</feature>
<feature type="transmembrane region" description="Helical" evidence="1">
    <location>
        <begin position="420"/>
        <end position="439"/>
    </location>
</feature>
<feature type="transmembrane region" description="Helical" evidence="1">
    <location>
        <begin position="455"/>
        <end position="477"/>
    </location>
</feature>
<feature type="region of interest" description="Disordered" evidence="2">
    <location>
        <begin position="653"/>
        <end position="678"/>
    </location>
</feature>
<sequence>MTRVCRALLFVLCGIFVHAQENELHFFGPRTDVLVVFTASREAQERETRAVQQLRLLVQDFEHQTPDVSVLVAITAHDHPPVPDFVPVDRLTGTKKLISLISSYKAPIVLILDETTGPPRLHTGAHRTVCPPWLLQAVYQHLTSHHVPIRYRDFDAILHRLGWLHEDPRHALYIKEHIPAVRMENSLYPPGALHTLPALLTQVYSEEWDTHYVSVSYGGTLYLIREQFFVILILGAVITLLLSLAIFSFLSDSRKRHYWNTILAMWWLPAILGVLSVCSVFVATQLTALFFLIRFGTHTSTGALPLLALIVKHSIAIALSCVCMANSKTIRDSMLHNGFIGGYLASTLCLLYAVLFSVIDFSLSAVFALEYALSLVFFSAQRKTTRRIMLAMMFLLFAPFLYAYLKNSAVTAPLSFHQSNVFFALGCVPFMLFMLTLFFEREKSHPRIPFIRRRNLLLSGALLTVLVINGVLWSVSLSSTRIPQEITACYRISERGLTLSLHSPLPIPRHIRARTHARLSTAEIQKAQDHLQISMDSRSYFGGRINVLEVRSQLRAQAIELRITSPHGTAAYEADRPFTRLEQGSVVRFISQARPPLPFTVTFSGDQNSTMQVQATVWTYDNPLQDAPPVMQDTTVRFIPMFELTRDVLFPSPSSQGVHATPEKNACIRDETVPNLQE</sequence>
<gene>
    <name type="ordered locus">TP_0564</name>
</gene>
<keyword id="KW-1003">Cell membrane</keyword>
<keyword id="KW-0472">Membrane</keyword>
<keyword id="KW-1185">Reference proteome</keyword>
<keyword id="KW-0812">Transmembrane</keyword>
<keyword id="KW-1133">Transmembrane helix</keyword>
<protein>
    <recommendedName>
        <fullName>Uncharacterized protein TP_0564</fullName>
    </recommendedName>
</protein>
<name>Y564_TREPA</name>
<evidence type="ECO:0000255" key="1"/>
<evidence type="ECO:0000256" key="2">
    <source>
        <dbReference type="SAM" id="MobiDB-lite"/>
    </source>
</evidence>
<evidence type="ECO:0000305" key="3"/>
<dbReference type="EMBL" id="AE000520">
    <property type="protein sequence ID" value="AAC65547.1"/>
    <property type="molecule type" value="Genomic_DNA"/>
</dbReference>
<dbReference type="PIR" id="B71308">
    <property type="entry name" value="B71308"/>
</dbReference>
<dbReference type="RefSeq" id="WP_010882011.1">
    <property type="nucleotide sequence ID" value="NC_021490.2"/>
</dbReference>
<dbReference type="IntAct" id="O83575">
    <property type="interactions" value="4"/>
</dbReference>
<dbReference type="STRING" id="243276.TP_0564"/>
<dbReference type="EnsemblBacteria" id="AAC65547">
    <property type="protein sequence ID" value="AAC65547"/>
    <property type="gene ID" value="TP_0564"/>
</dbReference>
<dbReference type="KEGG" id="tpa:TP_0564"/>
<dbReference type="KEGG" id="tpw:TPANIC_0564"/>
<dbReference type="eggNOG" id="ENOG502ZX8M">
    <property type="taxonomic scope" value="Bacteria"/>
</dbReference>
<dbReference type="HOGENOM" id="CLU_422063_0_0_12"/>
<dbReference type="OrthoDB" id="353681at2"/>
<dbReference type="Proteomes" id="UP000000811">
    <property type="component" value="Chromosome"/>
</dbReference>
<dbReference type="GO" id="GO:0005886">
    <property type="term" value="C:plasma membrane"/>
    <property type="evidence" value="ECO:0007669"/>
    <property type="project" value="UniProtKB-SubCell"/>
</dbReference>
<organism>
    <name type="scientific">Treponema pallidum (strain Nichols)</name>
    <dbReference type="NCBI Taxonomy" id="243276"/>
    <lineage>
        <taxon>Bacteria</taxon>
        <taxon>Pseudomonadati</taxon>
        <taxon>Spirochaetota</taxon>
        <taxon>Spirochaetia</taxon>
        <taxon>Spirochaetales</taxon>
        <taxon>Treponemataceae</taxon>
        <taxon>Treponema</taxon>
    </lineage>
</organism>
<reference key="1">
    <citation type="journal article" date="1998" name="Science">
        <title>Complete genome sequence of Treponema pallidum, the syphilis spirochete.</title>
        <authorList>
            <person name="Fraser C.M."/>
            <person name="Norris S.J."/>
            <person name="Weinstock G.M."/>
            <person name="White O."/>
            <person name="Sutton G.G."/>
            <person name="Dodson R.J."/>
            <person name="Gwinn M.L."/>
            <person name="Hickey E.K."/>
            <person name="Clayton R.A."/>
            <person name="Ketchum K.A."/>
            <person name="Sodergren E."/>
            <person name="Hardham J.M."/>
            <person name="McLeod M.P."/>
            <person name="Salzberg S.L."/>
            <person name="Peterson J.D."/>
            <person name="Khalak H.G."/>
            <person name="Richardson D.L."/>
            <person name="Howell J.K."/>
            <person name="Chidambaram M."/>
            <person name="Utterback T.R."/>
            <person name="McDonald L.A."/>
            <person name="Artiach P."/>
            <person name="Bowman C."/>
            <person name="Cotton M.D."/>
            <person name="Fujii C."/>
            <person name="Garland S.A."/>
            <person name="Hatch B."/>
            <person name="Horst K."/>
            <person name="Roberts K.M."/>
            <person name="Sandusky M."/>
            <person name="Weidman J.F."/>
            <person name="Smith H.O."/>
            <person name="Venter J.C."/>
        </authorList>
    </citation>
    <scope>NUCLEOTIDE SEQUENCE [LARGE SCALE GENOMIC DNA]</scope>
    <source>
        <strain>Nichols</strain>
    </source>
</reference>
<comment type="subcellular location">
    <subcellularLocation>
        <location evidence="3">Cell membrane</location>
        <topology evidence="3">Multi-pass membrane protein</topology>
    </subcellularLocation>
</comment>
<accession>O83575</accession>